<proteinExistence type="evidence at protein level"/>
<feature type="initiator methionine" description="Removed" evidence="4">
    <location>
        <position position="1"/>
    </location>
</feature>
<feature type="chain" id="PRO_0000432512" description="Succinate dehydrogenase 2 membrane subunit SdhC">
    <location>
        <begin position="2"/>
        <end position="136"/>
    </location>
</feature>
<feature type="transmembrane region" description="Helical" evidence="2">
    <location>
        <begin position="32"/>
        <end position="52"/>
    </location>
</feature>
<feature type="transmembrane region" description="Helical" evidence="2">
    <location>
        <begin position="70"/>
        <end position="90"/>
    </location>
</feature>
<feature type="transmembrane region" description="Helical" evidence="2">
    <location>
        <begin position="109"/>
        <end position="129"/>
    </location>
</feature>
<feature type="binding site" description="axial binding residue" evidence="1">
    <location>
        <position position="85"/>
    </location>
    <ligand>
        <name>heme</name>
        <dbReference type="ChEBI" id="CHEBI:30413"/>
        <note>ligand shared with second transmembrane subunit</note>
    </ligand>
    <ligandPart>
        <name>Fe</name>
        <dbReference type="ChEBI" id="CHEBI:18248"/>
    </ligandPart>
</feature>
<accession>O53368</accession>
<accession>I6XGV7</accession>
<accession>Q7D5Q4</accession>
<name>SDHC_MYCTU</name>
<comment type="function">
    <text evidence="6">Membrane-anchoring subunit of succinate dehydrogenase 2 (Sdh2). Sdh2 may catalyze the two-electron oxidation of succinate to fumarate with a corresponding reduction of quinone to quinol under low oxygen conditions, when the primary aerobic succinate dehydrogenase (Sdh1) is inhibited. Sdh2 seems to be the generator of the proton motive force (PMF) under hypoxia.</text>
</comment>
<comment type="cofactor">
    <cofactor evidence="1">
        <name>heme</name>
        <dbReference type="ChEBI" id="CHEBI:30413"/>
    </cofactor>
    <text evidence="1">The heme is bound between the two transmembrane subunits.</text>
</comment>
<comment type="subunit">
    <text evidence="6">Part of an enzyme complex containing four subunits: a flavoprotein (SdhA), an iron-sulfur protein (SdhB), plus two membrane-anchoring proteins (SdhC and SdhD).</text>
</comment>
<comment type="subcellular location">
    <subcellularLocation>
        <location evidence="2">Cell membrane</location>
        <topology evidence="2">Multi-pass membrane protein</topology>
    </subcellularLocation>
</comment>
<comment type="disruption phenotype">
    <text evidence="3">Cells lacking the sdh2 operon (sdhCDAB) display a stationary phase exit defect after 60 days in culture. They show only slight difference in intracellular succinate and malate concentrations during aerobic growth or hypoxia when compared to wild-type. The mutant strain is more susceptible to proton motive force (PMF) inhibition than the parental strain, and it was impossible to recover colonies from mutant cultures after 21 days. Cells harboring a deletion of sdh2 consume oxygen at a reduced rate and are able to modulate respiration as dissolved oxygen (DO) is depleted to about 6%.</text>
</comment>
<comment type="similarity">
    <text evidence="5">Belongs to the cytochrome b560 family.</text>
</comment>
<comment type="sequence caution" evidence="4">
    <conflict type="erroneous initiation">
        <sequence resource="EMBL-CDS" id="AFN51324"/>
    </conflict>
    <text>Truncated N-terminus.</text>
</comment>
<comment type="sequence caution" evidence="4">
    <conflict type="erroneous initiation">
        <sequence resource="EMBL-CDS" id="CCP46136"/>
    </conflict>
    <text>Truncated N-terminus.</text>
</comment>
<comment type="sequence caution" evidence="4">
    <conflict type="erroneous initiation">
        <sequence resource="EMBL-CDS" id="KBJ28045"/>
    </conflict>
    <text>Truncated N-terminus.</text>
</comment>
<organism>
    <name type="scientific">Mycobacterium tuberculosis (strain ATCC 25618 / H37Rv)</name>
    <dbReference type="NCBI Taxonomy" id="83332"/>
    <lineage>
        <taxon>Bacteria</taxon>
        <taxon>Bacillati</taxon>
        <taxon>Actinomycetota</taxon>
        <taxon>Actinomycetes</taxon>
        <taxon>Mycobacteriales</taxon>
        <taxon>Mycobacteriaceae</taxon>
        <taxon>Mycobacterium</taxon>
        <taxon>Mycobacterium tuberculosis complex</taxon>
    </lineage>
</organism>
<sequence>MNTTATTVSRGRRPPRTLYRGDPGMWSWVCHRISGATIFFFLFVHVLDAAMLRVSPQTYNAVLATYKTPIVGLMEYGLVAAVLFHALNGIRVILIDFWSEGPRYQRLMLWIIGSVFLLLMVPAGVVVGIHMWEHFR</sequence>
<dbReference type="EMBL" id="AL123456">
    <property type="protein sequence ID" value="CCP46136.1"/>
    <property type="status" value="ALT_INIT"/>
    <property type="molecule type" value="Genomic_DNA"/>
</dbReference>
<dbReference type="EMBL" id="CP003248">
    <property type="protein sequence ID" value="AFN51324.1"/>
    <property type="status" value="ALT_INIT"/>
    <property type="molecule type" value="Genomic_DNA"/>
</dbReference>
<dbReference type="EMBL" id="JLDD01000040">
    <property type="protein sequence ID" value="KBJ28045.1"/>
    <property type="status" value="ALT_INIT"/>
    <property type="molecule type" value="Genomic_DNA"/>
</dbReference>
<dbReference type="RefSeq" id="NP_217833.1">
    <property type="nucleotide sequence ID" value="NC_000962.3"/>
</dbReference>
<dbReference type="SMR" id="O53368"/>
<dbReference type="FunCoup" id="O53368">
    <property type="interactions" value="156"/>
</dbReference>
<dbReference type="STRING" id="83332.Rv3316"/>
<dbReference type="PaxDb" id="83332-Rv3316"/>
<dbReference type="DNASU" id="887969"/>
<dbReference type="GeneID" id="887969"/>
<dbReference type="KEGG" id="mtu:Rv3316"/>
<dbReference type="KEGG" id="mtv:RVBD_3316"/>
<dbReference type="PATRIC" id="fig|83332.111.peg.3701"/>
<dbReference type="TubercuList" id="Rv3316"/>
<dbReference type="eggNOG" id="COG2009">
    <property type="taxonomic scope" value="Bacteria"/>
</dbReference>
<dbReference type="HOGENOM" id="CLU_127125_0_1_11"/>
<dbReference type="InParanoid" id="O53368"/>
<dbReference type="OrthoDB" id="276905at2"/>
<dbReference type="BioCyc" id="MetaCyc:G185E-7591-MONOMER"/>
<dbReference type="Proteomes" id="UP000001584">
    <property type="component" value="Chromosome"/>
</dbReference>
<dbReference type="GO" id="GO:0005886">
    <property type="term" value="C:plasma membrane"/>
    <property type="evidence" value="ECO:0007669"/>
    <property type="project" value="UniProtKB-SubCell"/>
</dbReference>
<dbReference type="GO" id="GO:0009055">
    <property type="term" value="F:electron transfer activity"/>
    <property type="evidence" value="ECO:0007669"/>
    <property type="project" value="InterPro"/>
</dbReference>
<dbReference type="GO" id="GO:0046872">
    <property type="term" value="F:metal ion binding"/>
    <property type="evidence" value="ECO:0007669"/>
    <property type="project" value="UniProtKB-KW"/>
</dbReference>
<dbReference type="GO" id="GO:0006099">
    <property type="term" value="P:tricarboxylic acid cycle"/>
    <property type="evidence" value="ECO:0007669"/>
    <property type="project" value="UniProtKB-KW"/>
</dbReference>
<dbReference type="CDD" id="cd03501">
    <property type="entry name" value="SQR_TypeA_SdhC_like"/>
    <property type="match status" value="1"/>
</dbReference>
<dbReference type="Gene3D" id="1.20.1300.10">
    <property type="entry name" value="Fumarate reductase/succinate dehydrogenase, transmembrane subunit"/>
    <property type="match status" value="1"/>
</dbReference>
<dbReference type="InterPro" id="IPR039023">
    <property type="entry name" value="SdhC_prok"/>
</dbReference>
<dbReference type="InterPro" id="IPR034804">
    <property type="entry name" value="SQR/QFR_C/D"/>
</dbReference>
<dbReference type="InterPro" id="IPR014314">
    <property type="entry name" value="Succ_DH_cytb556"/>
</dbReference>
<dbReference type="InterPro" id="IPR000701">
    <property type="entry name" value="SuccDH_FuR_B_TM-su"/>
</dbReference>
<dbReference type="NCBIfam" id="TIGR02970">
    <property type="entry name" value="succ_dehyd_cytB"/>
    <property type="match status" value="1"/>
</dbReference>
<dbReference type="PANTHER" id="PTHR41910">
    <property type="entry name" value="SUCCINATE DEHYDROGENASE 2 MEMBRANE SUBUNIT SDHC"/>
    <property type="match status" value="1"/>
</dbReference>
<dbReference type="PANTHER" id="PTHR41910:SF1">
    <property type="entry name" value="SUCCINATE DEHYDROGENASE HYDROPHOBIC MEMBRANE ANCHOR SUBUNIT"/>
    <property type="match status" value="1"/>
</dbReference>
<dbReference type="Pfam" id="PF01127">
    <property type="entry name" value="Sdh_cyt"/>
    <property type="match status" value="1"/>
</dbReference>
<dbReference type="SUPFAM" id="SSF81343">
    <property type="entry name" value="Fumarate reductase respiratory complex transmembrane subunits"/>
    <property type="match status" value="1"/>
</dbReference>
<gene>
    <name evidence="8" type="primary">sdhC</name>
    <name evidence="8" type="ordered locus">Rv3316</name>
    <name evidence="7" type="ordered locus">RVBD_3316</name>
    <name evidence="9" type="ORF">P425_03457</name>
</gene>
<keyword id="KW-1003">Cell membrane</keyword>
<keyword id="KW-0903">Direct protein sequencing</keyword>
<keyword id="KW-0249">Electron transport</keyword>
<keyword id="KW-0349">Heme</keyword>
<keyword id="KW-0408">Iron</keyword>
<keyword id="KW-0472">Membrane</keyword>
<keyword id="KW-0479">Metal-binding</keyword>
<keyword id="KW-1185">Reference proteome</keyword>
<keyword id="KW-0812">Transmembrane</keyword>
<keyword id="KW-1133">Transmembrane helix</keyword>
<keyword id="KW-0813">Transport</keyword>
<keyword id="KW-0816">Tricarboxylic acid cycle</keyword>
<protein>
    <recommendedName>
        <fullName evidence="5">Succinate dehydrogenase 2 membrane subunit SdhC</fullName>
    </recommendedName>
</protein>
<evidence type="ECO:0000250" key="1">
    <source>
        <dbReference type="UniProtKB" id="P69054"/>
    </source>
</evidence>
<evidence type="ECO:0000255" key="2"/>
<evidence type="ECO:0000269" key="3">
    <source>
    </source>
</evidence>
<evidence type="ECO:0000269" key="4">
    <source>
    </source>
</evidence>
<evidence type="ECO:0000305" key="5"/>
<evidence type="ECO:0000305" key="6">
    <source>
    </source>
</evidence>
<evidence type="ECO:0000312" key="7">
    <source>
        <dbReference type="EMBL" id="AFN51324.1"/>
    </source>
</evidence>
<evidence type="ECO:0000312" key="8">
    <source>
        <dbReference type="EMBL" id="CCP46136.1"/>
    </source>
</evidence>
<evidence type="ECO:0000312" key="9">
    <source>
        <dbReference type="EMBL" id="KBJ28045.1"/>
    </source>
</evidence>
<reference key="1">
    <citation type="journal article" date="1998" name="Nature">
        <title>Deciphering the biology of Mycobacterium tuberculosis from the complete genome sequence.</title>
        <authorList>
            <person name="Cole S.T."/>
            <person name="Brosch R."/>
            <person name="Parkhill J."/>
            <person name="Garnier T."/>
            <person name="Churcher C.M."/>
            <person name="Harris D.E."/>
            <person name="Gordon S.V."/>
            <person name="Eiglmeier K."/>
            <person name="Gas S."/>
            <person name="Barry C.E. III"/>
            <person name="Tekaia F."/>
            <person name="Badcock K."/>
            <person name="Basham D."/>
            <person name="Brown D."/>
            <person name="Chillingworth T."/>
            <person name="Connor R."/>
            <person name="Davies R.M."/>
            <person name="Devlin K."/>
            <person name="Feltwell T."/>
            <person name="Gentles S."/>
            <person name="Hamlin N."/>
            <person name="Holroyd S."/>
            <person name="Hornsby T."/>
            <person name="Jagels K."/>
            <person name="Krogh A."/>
            <person name="McLean J."/>
            <person name="Moule S."/>
            <person name="Murphy L.D."/>
            <person name="Oliver S."/>
            <person name="Osborne J."/>
            <person name="Quail M.A."/>
            <person name="Rajandream M.A."/>
            <person name="Rogers J."/>
            <person name="Rutter S."/>
            <person name="Seeger K."/>
            <person name="Skelton S."/>
            <person name="Squares S."/>
            <person name="Squares R."/>
            <person name="Sulston J.E."/>
            <person name="Taylor K."/>
            <person name="Whitehead S."/>
            <person name="Barrell B.G."/>
        </authorList>
    </citation>
    <scope>NUCLEOTIDE SEQUENCE [LARGE SCALE GENOMIC DNA]</scope>
    <source>
        <strain>ATCC 25618 / H37Rv</strain>
    </source>
</reference>
<reference key="2">
    <citation type="submission" date="2013-11" db="EMBL/GenBank/DDBJ databases">
        <title>The genome sequence of Mycobacterium tuberculosis H37Rv.</title>
        <authorList>
            <consortium name="The Broad Institute Genome Sequencing Platform"/>
            <person name="Galagan J."/>
            <person name="Kreiswirth B."/>
            <person name="Dobos K."/>
            <person name="Fortune S."/>
            <person name="Fitzgerald M."/>
            <person name="Young S.K."/>
            <person name="Zeng Q."/>
            <person name="Gargeya S."/>
            <person name="Abouelleil A."/>
            <person name="Alvarado L."/>
            <person name="Berlin A.M."/>
            <person name="Chapman S.B."/>
            <person name="Gainer-Dewar J."/>
            <person name="Goldberg J."/>
            <person name="Gnerre S."/>
            <person name="Griggs A."/>
            <person name="Gujja S."/>
            <person name="Hansen M."/>
            <person name="Howarth C."/>
            <person name="Imamovic A."/>
            <person name="Larimer J."/>
            <person name="McCowan C."/>
            <person name="Murphy C."/>
            <person name="Pearson M."/>
            <person name="Poon T."/>
            <person name="Priest M."/>
            <person name="Roberts A."/>
            <person name="Saif S."/>
            <person name="Shea T."/>
            <person name="Sykes S."/>
            <person name="Wortman J."/>
            <person name="Nusbaum C."/>
            <person name="Birren B."/>
        </authorList>
    </citation>
    <scope>NUCLEOTIDE SEQUENCE [LARGE SCALE GENOMIC DNA]</scope>
    <source>
        <strain>ATCC 25618 / H37Rv</strain>
    </source>
</reference>
<reference key="3">
    <citation type="submission" date="2014-04" db="EMBL/GenBank/DDBJ databases">
        <title>The genome sequence of Mycobacterium tuberculosis H37Rv.</title>
        <authorList>
            <consortium name="The Broad Institute Genomics Platform"/>
            <consortium name="The Broad Institute Genome Sequencing Center for Infectious Disease"/>
            <person name="Earl A.M."/>
            <person name="Kreiswirth B."/>
            <person name="Gomez J."/>
            <person name="Victor T."/>
            <person name="Desjardins C."/>
            <person name="Abeel T."/>
            <person name="Young S."/>
            <person name="Zeng Q."/>
            <person name="Gargeya S."/>
            <person name="Abouelleil A."/>
            <person name="Alvarado L."/>
            <person name="Chapman S.B."/>
            <person name="Gainer-Dewar J."/>
            <person name="Goldberg J."/>
            <person name="Griggs A."/>
            <person name="Gujja S."/>
            <person name="Hansen M."/>
            <person name="Howarth C."/>
            <person name="Imamovic A."/>
            <person name="Larimer J."/>
            <person name="Murphy C."/>
            <person name="Naylor J."/>
            <person name="Pearson M."/>
            <person name="Poon T.W."/>
            <person name="Priest M."/>
            <person name="Roberts A."/>
            <person name="Saif S."/>
            <person name="Shea T."/>
            <person name="Sykes S."/>
            <person name="Wortman J."/>
            <person name="Nusbaum C."/>
            <person name="Birren B."/>
        </authorList>
    </citation>
    <scope>NUCLEOTIDE SEQUENCE [LARGE SCALE GENOMIC DNA]</scope>
    <source>
        <strain>ATCC 25618 / H37Rv</strain>
    </source>
</reference>
<reference key="4">
    <citation type="journal article" date="2022" name="Genomics">
        <title>Deep N-terminomics of Mycobacterium tuberculosis H37Rv extensively correct annotated encoding genes.</title>
        <authorList>
            <person name="Shi J."/>
            <person name="Meng S."/>
            <person name="Wan L."/>
            <person name="Zhang Z."/>
            <person name="Jiang S."/>
            <person name="Zhu H."/>
            <person name="Dai E."/>
            <person name="Chang L."/>
            <person name="Gao H."/>
            <person name="Wan K."/>
            <person name="Zhang L."/>
            <person name="Zhao X."/>
            <person name="Liu H."/>
            <person name="Lyu Z."/>
            <person name="Zhang Y."/>
            <person name="Xu P."/>
        </authorList>
    </citation>
    <scope>PROTEIN SEQUENCE OF 2-10</scope>
    <scope>SEQUENCE REVISION TO N-TERMINUS</scope>
    <source>
        <strain>H37Rv</strain>
    </source>
</reference>
<reference key="5">
    <citation type="journal article" date="2011" name="Mol. Cell. Proteomics">
        <title>Proteogenomic analysis of Mycobacterium tuberculosis by high resolution mass spectrometry.</title>
        <authorList>
            <person name="Kelkar D.S."/>
            <person name="Kumar D."/>
            <person name="Kumar P."/>
            <person name="Balakrishnan L."/>
            <person name="Muthusamy B."/>
            <person name="Yadav A.K."/>
            <person name="Shrivastava P."/>
            <person name="Marimuthu A."/>
            <person name="Anand S."/>
            <person name="Sundaram H."/>
            <person name="Kingsbury R."/>
            <person name="Harsha H.C."/>
            <person name="Nair B."/>
            <person name="Prasad T.S."/>
            <person name="Chauhan D.S."/>
            <person name="Katoch K."/>
            <person name="Katoch V.M."/>
            <person name="Kumar P."/>
            <person name="Chaerkady R."/>
            <person name="Ramachandran S."/>
            <person name="Dash D."/>
            <person name="Pandey A."/>
        </authorList>
    </citation>
    <scope>IDENTIFICATION BY MASS SPECTROMETRY [LARGE SCALE ANALYSIS]</scope>
    <source>
        <strain>ATCC 25618 / H37Rv</strain>
    </source>
</reference>
<reference key="6">
    <citation type="journal article" date="2014" name="PLoS Pathog.">
        <title>Succinate dehydrogenase is the regulator of respiration in Mycobacterium tuberculosis.</title>
        <authorList>
            <person name="Hartman T."/>
            <person name="Weinrick B."/>
            <person name="Vilcheze C."/>
            <person name="Berney M."/>
            <person name="Tufariello J."/>
            <person name="Cook G.M."/>
            <person name="Jacobs W.R. Jr."/>
        </authorList>
    </citation>
    <scope>FUNCTION</scope>
    <scope>DISRUPTION PHENOTYPE</scope>
    <source>
        <strain>H37Rv</strain>
    </source>
</reference>